<keyword id="KW-0010">Activator</keyword>
<keyword id="KW-0067">ATP-binding</keyword>
<keyword id="KW-0238">DNA-binding</keyword>
<keyword id="KW-0535">Nitrogen fixation</keyword>
<keyword id="KW-0547">Nucleotide-binding</keyword>
<keyword id="KW-0804">Transcription</keyword>
<keyword id="KW-0805">Transcription regulation</keyword>
<keyword id="KW-0902">Two-component regulatory system</keyword>
<reference key="1">
    <citation type="journal article" date="1989" name="J. Bacteriol.">
        <title>Two nifA-like genes required for expression of alternative nitrogenases by Azotobacter vinelandii.</title>
        <authorList>
            <person name="Joerger R.D."/>
            <person name="Jacobson M.R."/>
            <person name="Bishop P.E."/>
        </authorList>
    </citation>
    <scope>NUCLEOTIDE SEQUENCE [GENOMIC DNA]</scope>
</reference>
<feature type="chain" id="PRO_0000081317" description="Nitrogen fixation protein VnfA">
    <location>
        <begin position="1"/>
        <end position="522"/>
    </location>
</feature>
<feature type="domain" description="GAF">
    <location>
        <begin position="35"/>
        <end position="177"/>
    </location>
</feature>
<feature type="domain" description="Sigma-54 factor interaction" evidence="1">
    <location>
        <begin position="210"/>
        <end position="439"/>
    </location>
</feature>
<feature type="DNA-binding region" description="H-T-H motif">
    <location>
        <begin position="493"/>
        <end position="512"/>
    </location>
</feature>
<feature type="region of interest" description="A domain">
    <location>
        <begin position="22"/>
        <end position="183"/>
    </location>
</feature>
<feature type="binding site" evidence="1">
    <location>
        <begin position="238"/>
        <end position="245"/>
    </location>
    <ligand>
        <name>ATP</name>
        <dbReference type="ChEBI" id="CHEBI:30616"/>
    </ligand>
</feature>
<feature type="binding site" evidence="1">
    <location>
        <begin position="301"/>
        <end position="310"/>
    </location>
    <ligand>
        <name>ATP</name>
        <dbReference type="ChEBI" id="CHEBI:30616"/>
    </ligand>
</feature>
<gene>
    <name type="primary">vnfA</name>
</gene>
<accession>P12627</accession>
<organism>
    <name type="scientific">Azotobacter vinelandii</name>
    <dbReference type="NCBI Taxonomy" id="354"/>
    <lineage>
        <taxon>Bacteria</taxon>
        <taxon>Pseudomonadati</taxon>
        <taxon>Pseudomonadota</taxon>
        <taxon>Gammaproteobacteria</taxon>
        <taxon>Pseudomonadales</taxon>
        <taxon>Pseudomonadaceae</taxon>
        <taxon>Azotobacter</taxon>
    </lineage>
</organism>
<proteinExistence type="evidence at protein level"/>
<dbReference type="EMBL" id="M26752">
    <property type="protein sequence ID" value="AAA82516.1"/>
    <property type="molecule type" value="Genomic_DNA"/>
</dbReference>
<dbReference type="PIR" id="D44514">
    <property type="entry name" value="D44514"/>
</dbReference>
<dbReference type="SMR" id="P12627"/>
<dbReference type="MINT" id="P12627"/>
<dbReference type="GO" id="GO:0005524">
    <property type="term" value="F:ATP binding"/>
    <property type="evidence" value="ECO:0007669"/>
    <property type="project" value="UniProtKB-KW"/>
</dbReference>
<dbReference type="GO" id="GO:0016887">
    <property type="term" value="F:ATP hydrolysis activity"/>
    <property type="evidence" value="ECO:0007669"/>
    <property type="project" value="InterPro"/>
</dbReference>
<dbReference type="GO" id="GO:0042802">
    <property type="term" value="F:identical protein binding"/>
    <property type="evidence" value="ECO:0000353"/>
    <property type="project" value="IntAct"/>
</dbReference>
<dbReference type="GO" id="GO:0043565">
    <property type="term" value="F:sequence-specific DNA binding"/>
    <property type="evidence" value="ECO:0007669"/>
    <property type="project" value="InterPro"/>
</dbReference>
<dbReference type="GO" id="GO:0009399">
    <property type="term" value="P:nitrogen fixation"/>
    <property type="evidence" value="ECO:0007669"/>
    <property type="project" value="UniProtKB-KW"/>
</dbReference>
<dbReference type="GO" id="GO:0000160">
    <property type="term" value="P:phosphorelay signal transduction system"/>
    <property type="evidence" value="ECO:0007669"/>
    <property type="project" value="UniProtKB-KW"/>
</dbReference>
<dbReference type="GO" id="GO:0006355">
    <property type="term" value="P:regulation of DNA-templated transcription"/>
    <property type="evidence" value="ECO:0007669"/>
    <property type="project" value="InterPro"/>
</dbReference>
<dbReference type="CDD" id="cd00009">
    <property type="entry name" value="AAA"/>
    <property type="match status" value="1"/>
</dbReference>
<dbReference type="FunFam" id="1.10.8.60:FF:000014">
    <property type="entry name" value="DNA-binding transcriptional regulator NtrC"/>
    <property type="match status" value="1"/>
</dbReference>
<dbReference type="FunFam" id="3.40.50.300:FF:000006">
    <property type="entry name" value="DNA-binding transcriptional regulator NtrC"/>
    <property type="match status" value="1"/>
</dbReference>
<dbReference type="FunFam" id="3.30.450.40:FF:000081">
    <property type="entry name" value="Vanadium nitrogenase sigma54-dependent transcriptional activator, VnfA"/>
    <property type="match status" value="1"/>
</dbReference>
<dbReference type="Gene3D" id="1.10.8.60">
    <property type="match status" value="1"/>
</dbReference>
<dbReference type="Gene3D" id="3.30.450.40">
    <property type="match status" value="1"/>
</dbReference>
<dbReference type="Gene3D" id="1.10.10.60">
    <property type="entry name" value="Homeodomain-like"/>
    <property type="match status" value="1"/>
</dbReference>
<dbReference type="Gene3D" id="3.40.50.300">
    <property type="entry name" value="P-loop containing nucleotide triphosphate hydrolases"/>
    <property type="match status" value="1"/>
</dbReference>
<dbReference type="InterPro" id="IPR003593">
    <property type="entry name" value="AAA+_ATPase"/>
</dbReference>
<dbReference type="InterPro" id="IPR003018">
    <property type="entry name" value="GAF"/>
</dbReference>
<dbReference type="InterPro" id="IPR029016">
    <property type="entry name" value="GAF-like_dom_sf"/>
</dbReference>
<dbReference type="InterPro" id="IPR009057">
    <property type="entry name" value="Homeodomain-like_sf"/>
</dbReference>
<dbReference type="InterPro" id="IPR002197">
    <property type="entry name" value="HTH_Fis"/>
</dbReference>
<dbReference type="InterPro" id="IPR027417">
    <property type="entry name" value="P-loop_NTPase"/>
</dbReference>
<dbReference type="InterPro" id="IPR002078">
    <property type="entry name" value="Sigma_54_int"/>
</dbReference>
<dbReference type="InterPro" id="IPR025662">
    <property type="entry name" value="Sigma_54_int_dom_ATP-bd_1"/>
</dbReference>
<dbReference type="InterPro" id="IPR025943">
    <property type="entry name" value="Sigma_54_int_dom_ATP-bd_2"/>
</dbReference>
<dbReference type="InterPro" id="IPR025944">
    <property type="entry name" value="Sigma_54_int_dom_CS"/>
</dbReference>
<dbReference type="PANTHER" id="PTHR32071">
    <property type="entry name" value="TRANSCRIPTIONAL REGULATORY PROTEIN"/>
    <property type="match status" value="1"/>
</dbReference>
<dbReference type="Pfam" id="PF01590">
    <property type="entry name" value="GAF"/>
    <property type="match status" value="1"/>
</dbReference>
<dbReference type="Pfam" id="PF02954">
    <property type="entry name" value="HTH_8"/>
    <property type="match status" value="1"/>
</dbReference>
<dbReference type="Pfam" id="PF00158">
    <property type="entry name" value="Sigma54_activat"/>
    <property type="match status" value="1"/>
</dbReference>
<dbReference type="PRINTS" id="PR01590">
    <property type="entry name" value="HTHFIS"/>
</dbReference>
<dbReference type="SMART" id="SM00382">
    <property type="entry name" value="AAA"/>
    <property type="match status" value="1"/>
</dbReference>
<dbReference type="SMART" id="SM00065">
    <property type="entry name" value="GAF"/>
    <property type="match status" value="1"/>
</dbReference>
<dbReference type="SUPFAM" id="SSF55781">
    <property type="entry name" value="GAF domain-like"/>
    <property type="match status" value="1"/>
</dbReference>
<dbReference type="SUPFAM" id="SSF46689">
    <property type="entry name" value="Homeodomain-like"/>
    <property type="match status" value="1"/>
</dbReference>
<dbReference type="SUPFAM" id="SSF52540">
    <property type="entry name" value="P-loop containing nucleoside triphosphate hydrolases"/>
    <property type="match status" value="1"/>
</dbReference>
<dbReference type="PROSITE" id="PS00675">
    <property type="entry name" value="SIGMA54_INTERACT_1"/>
    <property type="match status" value="1"/>
</dbReference>
<dbReference type="PROSITE" id="PS00676">
    <property type="entry name" value="SIGMA54_INTERACT_2"/>
    <property type="match status" value="1"/>
</dbReference>
<dbReference type="PROSITE" id="PS00688">
    <property type="entry name" value="SIGMA54_INTERACT_3"/>
    <property type="match status" value="1"/>
</dbReference>
<dbReference type="PROSITE" id="PS50045">
    <property type="entry name" value="SIGMA54_INTERACT_4"/>
    <property type="match status" value="1"/>
</dbReference>
<comment type="function">
    <text>Required for the expression of the V-dependent nitrogen fixation system in Azotobacter vinelandii. It is required for the regulation of nitrogenase 2 transcription. Interacts with sigma-54.</text>
</comment>
<comment type="interaction">
    <interactant intactId="EBI-7020421">
        <id>P12627</id>
    </interactant>
    <interactant intactId="EBI-7020421">
        <id>P12627</id>
        <label>vnfA</label>
    </interactant>
    <organismsDiffer>false</organismsDiffer>
    <experiments>2</experiments>
</comment>
<name>VNFA_AZOVI</name>
<protein>
    <recommendedName>
        <fullName>Nitrogen fixation protein VnfA</fullName>
    </recommendedName>
</protein>
<sequence>MSSLPQYCECGLGECRTDVLPLLYEMSQIATESGDLSSIISILLRLMKRHMKVVRGMVTLYDRDSGSIVLHESFGLSPEEAGKGVYLLGEGIIGRVVETGQSIVVPCIRDEPAFLNRTGSRDRDSDDANLSFICVPILRGRQVMGTISAERLYDNAELLKLDVEVLSILATTTAQAVELYLVENVENVALEAENRRLRSALGERFKPANIIGNSKPMLEVYQLIERVVRTRTTVLILGESGVGKELVAGAIHYNSPAAKGPFVKFNCASLPESVIESELFGHEKGSFTGAIGLRKGRFEEAAGGTIFLDEVGEMSLTTQAKLLRVLQERSFERVGGNTTIHVDLRVIAATNRNLAEMVADGTFAEDLYYRLNVFPITIPPLRERGSDIITLADHFVSRFSREMGIEVNRISTPRLNMLQSYQWPGNVRELENVIERAMLLSEDGVIHGYHLPPSLQAPVVGDSEAPPDGLEARLGAIEYELIVEALKLHHGNMTEAATHLGLTARVLGLRMGKYNLNYKDYR</sequence>
<evidence type="ECO:0000255" key="1">
    <source>
        <dbReference type="PROSITE-ProRule" id="PRU00193"/>
    </source>
</evidence>